<sequence length="536" mass="57716">MPEGKATSSASNTGKNKGGAYQDRDKPAQIRYSNISAAKAVADAVRTSLGPKGMDKMIQDEKGDVTITNDGATILKQMQVLHPSAKMLVELSKAQDIEAGDGTTSVVVIAGALLDSCNRLLQRGIHPTIISESFQKAVDKGVEVLTAMSQPVQLGDRETLLNSATTSLCSKVVSQYSSLLAPMSVDAVMRVIDPATATSVDLHDIKIIKKLGGTIDDCELVEGLVLTQRVANSSVSRVEKAKIGLIQFCLSPPKTDMDNQIVVSDYTQMDRVLREERAYILNMVKQIKKAGCNVLFIQKSILRDALSDLALHFLNKMKIMVVKDIEREDIEFICKTIGTKPIAHIDHFTPEMLGTAELAEEVSLDGSGKLVKITGCASPGKTVSIVVRGSNKLVIEEAERSIHDALCVIRCLVKKRALIAGGGAPEIELAVRLAEYSRTLGGMEAYCVRAYSDALEVIPSTLAENAGLNPISTVTELRNRHAQGDKMAGINVRKGGISNIMEELVVQPLLVSISALTLATETVRSILKIDDVVNAR</sequence>
<dbReference type="EC" id="3.6.1.-" evidence="1"/>
<dbReference type="EMBL" id="D49483">
    <property type="protein sequence ID" value="BAA08447.1"/>
    <property type="molecule type" value="mRNA"/>
</dbReference>
<dbReference type="EMBL" id="D49484">
    <property type="protein sequence ID" value="BAA18913.1"/>
    <property type="molecule type" value="Genomic_DNA"/>
</dbReference>
<dbReference type="PIR" id="JC4521">
    <property type="entry name" value="JC4521"/>
</dbReference>
<dbReference type="RefSeq" id="NP_001027851.1">
    <property type="nucleotide sequence ID" value="NM_001032679.1"/>
</dbReference>
<dbReference type="SMR" id="P53451"/>
<dbReference type="FunCoup" id="P53451">
    <property type="interactions" value="2284"/>
</dbReference>
<dbReference type="STRING" id="31033.ENSTRUP00000051960"/>
<dbReference type="GeneID" id="446052"/>
<dbReference type="KEGG" id="tru:446052"/>
<dbReference type="CTD" id="10575"/>
<dbReference type="eggNOG" id="KOG0358">
    <property type="taxonomic scope" value="Eukaryota"/>
</dbReference>
<dbReference type="HOGENOM" id="CLU_008891_9_1_1"/>
<dbReference type="InParanoid" id="P53451"/>
<dbReference type="OrthoDB" id="10248520at2759"/>
<dbReference type="TreeFam" id="TF106332"/>
<dbReference type="Proteomes" id="UP000005226">
    <property type="component" value="Unplaced"/>
</dbReference>
<dbReference type="GO" id="GO:0005737">
    <property type="term" value="C:cytoplasm"/>
    <property type="evidence" value="ECO:0007669"/>
    <property type="project" value="UniProtKB-SubCell"/>
</dbReference>
<dbReference type="GO" id="GO:0005524">
    <property type="term" value="F:ATP binding"/>
    <property type="evidence" value="ECO:0007669"/>
    <property type="project" value="UniProtKB-KW"/>
</dbReference>
<dbReference type="GO" id="GO:0016887">
    <property type="term" value="F:ATP hydrolysis activity"/>
    <property type="evidence" value="ECO:0007669"/>
    <property type="project" value="InterPro"/>
</dbReference>
<dbReference type="GO" id="GO:0140662">
    <property type="term" value="F:ATP-dependent protein folding chaperone"/>
    <property type="evidence" value="ECO:0007669"/>
    <property type="project" value="InterPro"/>
</dbReference>
<dbReference type="GO" id="GO:0051082">
    <property type="term" value="F:unfolded protein binding"/>
    <property type="evidence" value="ECO:0007669"/>
    <property type="project" value="InterPro"/>
</dbReference>
<dbReference type="CDD" id="cd03338">
    <property type="entry name" value="TCP1_delta"/>
    <property type="match status" value="1"/>
</dbReference>
<dbReference type="FunFam" id="3.50.7.10:FF:000010">
    <property type="entry name" value="T-complex protein 1 subunit delta"/>
    <property type="match status" value="1"/>
</dbReference>
<dbReference type="Gene3D" id="3.50.7.10">
    <property type="entry name" value="GroEL"/>
    <property type="match status" value="1"/>
</dbReference>
<dbReference type="Gene3D" id="1.10.560.10">
    <property type="entry name" value="GroEL-like equatorial domain"/>
    <property type="match status" value="1"/>
</dbReference>
<dbReference type="Gene3D" id="3.30.260.10">
    <property type="entry name" value="TCP-1-like chaperonin intermediate domain"/>
    <property type="match status" value="1"/>
</dbReference>
<dbReference type="InterPro" id="IPR012717">
    <property type="entry name" value="Chap_CCT_delta"/>
</dbReference>
<dbReference type="InterPro" id="IPR017998">
    <property type="entry name" value="Chaperone_TCP-1"/>
</dbReference>
<dbReference type="InterPro" id="IPR002194">
    <property type="entry name" value="Chaperonin_TCP-1_CS"/>
</dbReference>
<dbReference type="InterPro" id="IPR002423">
    <property type="entry name" value="Cpn60/GroEL/TCP-1"/>
</dbReference>
<dbReference type="InterPro" id="IPR027409">
    <property type="entry name" value="GroEL-like_apical_dom_sf"/>
</dbReference>
<dbReference type="InterPro" id="IPR027413">
    <property type="entry name" value="GROEL-like_equatorial_sf"/>
</dbReference>
<dbReference type="InterPro" id="IPR027410">
    <property type="entry name" value="TCP-1-like_intermed_sf"/>
</dbReference>
<dbReference type="InterPro" id="IPR053374">
    <property type="entry name" value="TCP-1_chaperonin"/>
</dbReference>
<dbReference type="InterPro" id="IPR054827">
    <property type="entry name" value="thermosome_alpha"/>
</dbReference>
<dbReference type="NCBIfam" id="TIGR02342">
    <property type="entry name" value="chap_CCT_delta"/>
    <property type="match status" value="1"/>
</dbReference>
<dbReference type="NCBIfam" id="NF041082">
    <property type="entry name" value="thermosome_alpha"/>
    <property type="match status" value="1"/>
</dbReference>
<dbReference type="NCBIfam" id="NF041083">
    <property type="entry name" value="thermosome_beta"/>
    <property type="match status" value="1"/>
</dbReference>
<dbReference type="PANTHER" id="PTHR11353">
    <property type="entry name" value="CHAPERONIN"/>
    <property type="match status" value="1"/>
</dbReference>
<dbReference type="Pfam" id="PF00118">
    <property type="entry name" value="Cpn60_TCP1"/>
    <property type="match status" value="1"/>
</dbReference>
<dbReference type="PRINTS" id="PR00304">
    <property type="entry name" value="TCOMPLEXTCP1"/>
</dbReference>
<dbReference type="SUPFAM" id="SSF52029">
    <property type="entry name" value="GroEL apical domain-like"/>
    <property type="match status" value="1"/>
</dbReference>
<dbReference type="SUPFAM" id="SSF48592">
    <property type="entry name" value="GroEL equatorial domain-like"/>
    <property type="match status" value="1"/>
</dbReference>
<dbReference type="SUPFAM" id="SSF54849">
    <property type="entry name" value="GroEL-intermediate domain like"/>
    <property type="match status" value="1"/>
</dbReference>
<dbReference type="PROSITE" id="PS00750">
    <property type="entry name" value="TCP1_1"/>
    <property type="match status" value="1"/>
</dbReference>
<dbReference type="PROSITE" id="PS00751">
    <property type="entry name" value="TCP1_2"/>
    <property type="match status" value="1"/>
</dbReference>
<dbReference type="PROSITE" id="PS00995">
    <property type="entry name" value="TCP1_3"/>
    <property type="match status" value="1"/>
</dbReference>
<name>TCPD_TAKRU</name>
<accession>P53451</accession>
<reference key="1">
    <citation type="journal article" date="1995" name="Gene">
        <title>Cloning and sequencing of the chaperonin-encoding Cctd gene from Fugu rubripes rubripes.</title>
        <authorList>
            <person name="Yoda T."/>
            <person name="Morita T."/>
            <person name="Kawatsu K."/>
            <person name="Sueki K."/>
            <person name="Shibata T."/>
            <person name="Hamano Y."/>
        </authorList>
    </citation>
    <scope>NUCLEOTIDE SEQUENCE [GENOMIC DNA / MRNA]</scope>
    <source>
        <tissue>Testis</tissue>
    </source>
</reference>
<comment type="function">
    <text evidence="1">Component of the chaperonin-containing T-complex (TRiC), a molecular chaperone complex that assists the folding of actin, tubulin and other proteins upon ATP hydrolysis.</text>
</comment>
<comment type="catalytic activity">
    <reaction evidence="1">
        <text>ATP + H2O = ADP + phosphate + H(+)</text>
        <dbReference type="Rhea" id="RHEA:13065"/>
        <dbReference type="ChEBI" id="CHEBI:15377"/>
        <dbReference type="ChEBI" id="CHEBI:15378"/>
        <dbReference type="ChEBI" id="CHEBI:30616"/>
        <dbReference type="ChEBI" id="CHEBI:43474"/>
        <dbReference type="ChEBI" id="CHEBI:456216"/>
    </reaction>
</comment>
<comment type="subunit">
    <text evidence="1">Component of the chaperonin-containing T-complex (TRiC), a hexadecamer composed of two identical back-to-back stacked rings enclosing a protein folding chamber. Each ring is made up of eight different subunits: TCP1/CCT1, CCT2, CCT3, CCT4, CCT5, CCT6A/CCT6, CCT7, CCT8.</text>
</comment>
<comment type="subcellular location">
    <subcellularLocation>
        <location evidence="1">Cytoplasm</location>
    </subcellularLocation>
</comment>
<comment type="similarity">
    <text evidence="3">Belongs to the TCP-1 chaperonin family.</text>
</comment>
<keyword id="KW-0067">ATP-binding</keyword>
<keyword id="KW-0143">Chaperone</keyword>
<keyword id="KW-0963">Cytoplasm</keyword>
<keyword id="KW-0378">Hydrolase</keyword>
<keyword id="KW-0460">Magnesium</keyword>
<keyword id="KW-0479">Metal-binding</keyword>
<keyword id="KW-0547">Nucleotide-binding</keyword>
<keyword id="KW-1185">Reference proteome</keyword>
<evidence type="ECO:0000250" key="1">
    <source>
        <dbReference type="UniProtKB" id="P50991"/>
    </source>
</evidence>
<evidence type="ECO:0000256" key="2">
    <source>
        <dbReference type="SAM" id="MobiDB-lite"/>
    </source>
</evidence>
<evidence type="ECO:0000305" key="3"/>
<feature type="chain" id="PRO_0000128336" description="T-complex protein 1 subunit delta">
    <location>
        <begin position="1"/>
        <end position="536"/>
    </location>
</feature>
<feature type="region of interest" description="Disordered" evidence="2">
    <location>
        <begin position="1"/>
        <end position="26"/>
    </location>
</feature>
<feature type="compositionally biased region" description="Polar residues" evidence="2">
    <location>
        <begin position="1"/>
        <end position="15"/>
    </location>
</feature>
<feature type="binding site" evidence="1">
    <location>
        <position position="50"/>
    </location>
    <ligand>
        <name>ADP</name>
        <dbReference type="ChEBI" id="CHEBI:456216"/>
    </ligand>
</feature>
<feature type="binding site" evidence="1">
    <location>
        <position position="50"/>
    </location>
    <ligand>
        <name>ATP</name>
        <dbReference type="ChEBI" id="CHEBI:30616"/>
    </ligand>
</feature>
<feature type="binding site" evidence="1">
    <location>
        <position position="101"/>
    </location>
    <ligand>
        <name>Mg(2+)</name>
        <dbReference type="ChEBI" id="CHEBI:18420"/>
    </ligand>
</feature>
<feature type="binding site" evidence="1">
    <location>
        <position position="102"/>
    </location>
    <ligand>
        <name>ADP</name>
        <dbReference type="ChEBI" id="CHEBI:456216"/>
    </ligand>
</feature>
<feature type="binding site" evidence="1">
    <location>
        <position position="102"/>
    </location>
    <ligand>
        <name>ATP</name>
        <dbReference type="ChEBI" id="CHEBI:30616"/>
    </ligand>
</feature>
<feature type="binding site" evidence="1">
    <location>
        <position position="103"/>
    </location>
    <ligand>
        <name>ADP</name>
        <dbReference type="ChEBI" id="CHEBI:456216"/>
    </ligand>
</feature>
<feature type="binding site" evidence="1">
    <location>
        <position position="103"/>
    </location>
    <ligand>
        <name>ATP</name>
        <dbReference type="ChEBI" id="CHEBI:30616"/>
    </ligand>
</feature>
<feature type="binding site" evidence="1">
    <location>
        <position position="104"/>
    </location>
    <ligand>
        <name>ADP</name>
        <dbReference type="ChEBI" id="CHEBI:456216"/>
    </ligand>
</feature>
<feature type="binding site" evidence="1">
    <location>
        <position position="105"/>
    </location>
    <ligand>
        <name>ADP</name>
        <dbReference type="ChEBI" id="CHEBI:456216"/>
    </ligand>
</feature>
<feature type="binding site" evidence="1">
    <location>
        <position position="170"/>
    </location>
    <ligand>
        <name>ADP</name>
        <dbReference type="ChEBI" id="CHEBI:456216"/>
    </ligand>
</feature>
<feature type="binding site" evidence="1">
    <location>
        <position position="171"/>
    </location>
    <ligand>
        <name>ADP</name>
        <dbReference type="ChEBI" id="CHEBI:456216"/>
    </ligand>
</feature>
<feature type="binding site" evidence="1">
    <location>
        <position position="171"/>
    </location>
    <ligand>
        <name>ATP</name>
        <dbReference type="ChEBI" id="CHEBI:30616"/>
    </ligand>
</feature>
<feature type="binding site" evidence="1">
    <location>
        <position position="422"/>
    </location>
    <ligand>
        <name>ADP</name>
        <dbReference type="ChEBI" id="CHEBI:456216"/>
    </ligand>
</feature>
<feature type="binding site" evidence="1">
    <location>
        <position position="507"/>
    </location>
    <ligand>
        <name>ADP</name>
        <dbReference type="ChEBI" id="CHEBI:456216"/>
    </ligand>
</feature>
<organism>
    <name type="scientific">Takifugu rubripes</name>
    <name type="common">Japanese pufferfish</name>
    <name type="synonym">Fugu rubripes</name>
    <dbReference type="NCBI Taxonomy" id="31033"/>
    <lineage>
        <taxon>Eukaryota</taxon>
        <taxon>Metazoa</taxon>
        <taxon>Chordata</taxon>
        <taxon>Craniata</taxon>
        <taxon>Vertebrata</taxon>
        <taxon>Euteleostomi</taxon>
        <taxon>Actinopterygii</taxon>
        <taxon>Neopterygii</taxon>
        <taxon>Teleostei</taxon>
        <taxon>Neoteleostei</taxon>
        <taxon>Acanthomorphata</taxon>
        <taxon>Eupercaria</taxon>
        <taxon>Tetraodontiformes</taxon>
        <taxon>Tetradontoidea</taxon>
        <taxon>Tetraodontidae</taxon>
        <taxon>Takifugu</taxon>
    </lineage>
</organism>
<proteinExistence type="evidence at transcript level"/>
<protein>
    <recommendedName>
        <fullName>T-complex protein 1 subunit delta</fullName>
        <shortName>TCP-1-delta</shortName>
        <ecNumber evidence="1">3.6.1.-</ecNumber>
    </recommendedName>
    <alternativeName>
        <fullName>CCT-delta</fullName>
    </alternativeName>
</protein>
<gene>
    <name type="primary">cct4</name>
    <name type="synonym">cctd</name>
</gene>